<proteinExistence type="inferred from homology"/>
<feature type="chain" id="PRO_1000148516" description="PF03932 family protein CutC">
    <location>
        <begin position="1"/>
        <end position="248"/>
    </location>
</feature>
<name>CUTC_ECO81</name>
<accession>B7MW68</accession>
<organism>
    <name type="scientific">Escherichia coli O81 (strain ED1a)</name>
    <dbReference type="NCBI Taxonomy" id="585397"/>
    <lineage>
        <taxon>Bacteria</taxon>
        <taxon>Pseudomonadati</taxon>
        <taxon>Pseudomonadota</taxon>
        <taxon>Gammaproteobacteria</taxon>
        <taxon>Enterobacterales</taxon>
        <taxon>Enterobacteriaceae</taxon>
        <taxon>Escherichia</taxon>
    </lineage>
</organism>
<sequence length="248" mass="26632">MALLEICCYSMECALTAQQNGADRVELCAAPKEGGLTPSLGVLKSVRQRVTIPVHPIIRPRGGDFCYSDGEFAAILEDVRTVRELGFPGLVTGVLEVDGNVDMPRMEKIMAAAGPLAVTFHRAFDMCANPLNTLNNLAELGITRVLTSGQKSDALQGLSKIMELIAHRDAPIIMAGAGVRAENLHHFLDAGVLEVHSSAGAWQASPMRYRNQGLSMSSDAHADEYSRYVVDGAAVAEMKGIIECHQAK</sequence>
<keyword id="KW-0963">Cytoplasm</keyword>
<gene>
    <name evidence="1" type="primary">cutC</name>
    <name type="ordered locus">ECED1_2143</name>
</gene>
<dbReference type="EMBL" id="CU928162">
    <property type="protein sequence ID" value="CAR08334.2"/>
    <property type="molecule type" value="Genomic_DNA"/>
</dbReference>
<dbReference type="RefSeq" id="WP_001185752.1">
    <property type="nucleotide sequence ID" value="NC_011745.1"/>
</dbReference>
<dbReference type="SMR" id="B7MW68"/>
<dbReference type="KEGG" id="ecq:ECED1_2143"/>
<dbReference type="HOGENOM" id="CLU_050555_3_1_6"/>
<dbReference type="Proteomes" id="UP000000748">
    <property type="component" value="Chromosome"/>
</dbReference>
<dbReference type="GO" id="GO:0005737">
    <property type="term" value="C:cytoplasm"/>
    <property type="evidence" value="ECO:0007669"/>
    <property type="project" value="UniProtKB-SubCell"/>
</dbReference>
<dbReference type="GO" id="GO:0005507">
    <property type="term" value="F:copper ion binding"/>
    <property type="evidence" value="ECO:0007669"/>
    <property type="project" value="TreeGrafter"/>
</dbReference>
<dbReference type="FunFam" id="3.20.20.380:FF:000001">
    <property type="entry name" value="Copper homeostasis protein CutC"/>
    <property type="match status" value="1"/>
</dbReference>
<dbReference type="Gene3D" id="3.20.20.380">
    <property type="entry name" value="Copper homeostasis (CutC) domain"/>
    <property type="match status" value="1"/>
</dbReference>
<dbReference type="HAMAP" id="MF_00795">
    <property type="entry name" value="CutC"/>
    <property type="match status" value="1"/>
</dbReference>
<dbReference type="InterPro" id="IPR005627">
    <property type="entry name" value="CutC-like"/>
</dbReference>
<dbReference type="InterPro" id="IPR036822">
    <property type="entry name" value="CutC-like_dom_sf"/>
</dbReference>
<dbReference type="NCBIfam" id="NF008603">
    <property type="entry name" value="PRK11572.1"/>
    <property type="match status" value="1"/>
</dbReference>
<dbReference type="PANTHER" id="PTHR12598">
    <property type="entry name" value="COPPER HOMEOSTASIS PROTEIN CUTC"/>
    <property type="match status" value="1"/>
</dbReference>
<dbReference type="PANTHER" id="PTHR12598:SF0">
    <property type="entry name" value="COPPER HOMEOSTASIS PROTEIN CUTC HOMOLOG"/>
    <property type="match status" value="1"/>
</dbReference>
<dbReference type="Pfam" id="PF03932">
    <property type="entry name" value="CutC"/>
    <property type="match status" value="1"/>
</dbReference>
<dbReference type="SUPFAM" id="SSF110395">
    <property type="entry name" value="CutC-like"/>
    <property type="match status" value="1"/>
</dbReference>
<evidence type="ECO:0000255" key="1">
    <source>
        <dbReference type="HAMAP-Rule" id="MF_00795"/>
    </source>
</evidence>
<protein>
    <recommendedName>
        <fullName evidence="1">PF03932 family protein CutC</fullName>
    </recommendedName>
</protein>
<comment type="subunit">
    <text evidence="1">Homodimer.</text>
</comment>
<comment type="subcellular location">
    <subcellularLocation>
        <location evidence="1">Cytoplasm</location>
    </subcellularLocation>
</comment>
<comment type="similarity">
    <text evidence="1">Belongs to the CutC family.</text>
</comment>
<comment type="caution">
    <text evidence="1">Once thought to be involved in copper homeostasis, experiments in E.coli have shown this is not the case.</text>
</comment>
<reference key="1">
    <citation type="journal article" date="2009" name="PLoS Genet.">
        <title>Organised genome dynamics in the Escherichia coli species results in highly diverse adaptive paths.</title>
        <authorList>
            <person name="Touchon M."/>
            <person name="Hoede C."/>
            <person name="Tenaillon O."/>
            <person name="Barbe V."/>
            <person name="Baeriswyl S."/>
            <person name="Bidet P."/>
            <person name="Bingen E."/>
            <person name="Bonacorsi S."/>
            <person name="Bouchier C."/>
            <person name="Bouvet O."/>
            <person name="Calteau A."/>
            <person name="Chiapello H."/>
            <person name="Clermont O."/>
            <person name="Cruveiller S."/>
            <person name="Danchin A."/>
            <person name="Diard M."/>
            <person name="Dossat C."/>
            <person name="Karoui M.E."/>
            <person name="Frapy E."/>
            <person name="Garry L."/>
            <person name="Ghigo J.M."/>
            <person name="Gilles A.M."/>
            <person name="Johnson J."/>
            <person name="Le Bouguenec C."/>
            <person name="Lescat M."/>
            <person name="Mangenot S."/>
            <person name="Martinez-Jehanne V."/>
            <person name="Matic I."/>
            <person name="Nassif X."/>
            <person name="Oztas S."/>
            <person name="Petit M.A."/>
            <person name="Pichon C."/>
            <person name="Rouy Z."/>
            <person name="Ruf C.S."/>
            <person name="Schneider D."/>
            <person name="Tourret J."/>
            <person name="Vacherie B."/>
            <person name="Vallenet D."/>
            <person name="Medigue C."/>
            <person name="Rocha E.P.C."/>
            <person name="Denamur E."/>
        </authorList>
    </citation>
    <scope>NUCLEOTIDE SEQUENCE [LARGE SCALE GENOMIC DNA]</scope>
    <source>
        <strain>ED1a</strain>
    </source>
</reference>